<gene>
    <name evidence="1" type="primary">thyA</name>
    <name type="ordered locus">BCI_0544</name>
</gene>
<dbReference type="EC" id="2.1.1.45" evidence="1"/>
<dbReference type="EMBL" id="CP000238">
    <property type="protein sequence ID" value="ABF14145.1"/>
    <property type="molecule type" value="Genomic_DNA"/>
</dbReference>
<dbReference type="RefSeq" id="WP_011520707.1">
    <property type="nucleotide sequence ID" value="NC_007984.1"/>
</dbReference>
<dbReference type="SMR" id="Q1LSU0"/>
<dbReference type="STRING" id="374463.BCI_0544"/>
<dbReference type="KEGG" id="bci:BCI_0544"/>
<dbReference type="HOGENOM" id="CLU_021669_0_0_6"/>
<dbReference type="OrthoDB" id="9774633at2"/>
<dbReference type="UniPathway" id="UPA00575"/>
<dbReference type="Proteomes" id="UP000002427">
    <property type="component" value="Chromosome"/>
</dbReference>
<dbReference type="GO" id="GO:0005829">
    <property type="term" value="C:cytosol"/>
    <property type="evidence" value="ECO:0007669"/>
    <property type="project" value="TreeGrafter"/>
</dbReference>
<dbReference type="GO" id="GO:0004799">
    <property type="term" value="F:thymidylate synthase activity"/>
    <property type="evidence" value="ECO:0007669"/>
    <property type="project" value="UniProtKB-UniRule"/>
</dbReference>
<dbReference type="GO" id="GO:0006231">
    <property type="term" value="P:dTMP biosynthetic process"/>
    <property type="evidence" value="ECO:0007669"/>
    <property type="project" value="UniProtKB-UniRule"/>
</dbReference>
<dbReference type="GO" id="GO:0006235">
    <property type="term" value="P:dTTP biosynthetic process"/>
    <property type="evidence" value="ECO:0007669"/>
    <property type="project" value="UniProtKB-UniRule"/>
</dbReference>
<dbReference type="GO" id="GO:0032259">
    <property type="term" value="P:methylation"/>
    <property type="evidence" value="ECO:0007669"/>
    <property type="project" value="UniProtKB-KW"/>
</dbReference>
<dbReference type="CDD" id="cd00351">
    <property type="entry name" value="TS_Pyrimidine_HMase"/>
    <property type="match status" value="1"/>
</dbReference>
<dbReference type="FunFam" id="3.30.572.10:FF:000001">
    <property type="entry name" value="Thymidylate synthase"/>
    <property type="match status" value="1"/>
</dbReference>
<dbReference type="Gene3D" id="3.30.572.10">
    <property type="entry name" value="Thymidylate synthase/dCMP hydroxymethylase domain"/>
    <property type="match status" value="1"/>
</dbReference>
<dbReference type="HAMAP" id="MF_00008">
    <property type="entry name" value="Thymidy_synth_bact"/>
    <property type="match status" value="1"/>
</dbReference>
<dbReference type="InterPro" id="IPR045097">
    <property type="entry name" value="Thymidate_synth/dCMP_Mease"/>
</dbReference>
<dbReference type="InterPro" id="IPR023451">
    <property type="entry name" value="Thymidate_synth/dCMP_Mease_dom"/>
</dbReference>
<dbReference type="InterPro" id="IPR036926">
    <property type="entry name" value="Thymidate_synth/dCMP_Mease_sf"/>
</dbReference>
<dbReference type="InterPro" id="IPR000398">
    <property type="entry name" value="Thymidylate_synthase"/>
</dbReference>
<dbReference type="InterPro" id="IPR020940">
    <property type="entry name" value="Thymidylate_synthase_AS"/>
</dbReference>
<dbReference type="NCBIfam" id="NF002497">
    <property type="entry name" value="PRK01827.1-3"/>
    <property type="match status" value="1"/>
</dbReference>
<dbReference type="NCBIfam" id="NF002499">
    <property type="entry name" value="PRK01827.1-5"/>
    <property type="match status" value="1"/>
</dbReference>
<dbReference type="NCBIfam" id="TIGR03284">
    <property type="entry name" value="thym_sym"/>
    <property type="match status" value="2"/>
</dbReference>
<dbReference type="PANTHER" id="PTHR11548:SF9">
    <property type="entry name" value="THYMIDYLATE SYNTHASE"/>
    <property type="match status" value="1"/>
</dbReference>
<dbReference type="PANTHER" id="PTHR11548">
    <property type="entry name" value="THYMIDYLATE SYNTHASE 1"/>
    <property type="match status" value="1"/>
</dbReference>
<dbReference type="Pfam" id="PF00303">
    <property type="entry name" value="Thymidylat_synt"/>
    <property type="match status" value="1"/>
</dbReference>
<dbReference type="PRINTS" id="PR00108">
    <property type="entry name" value="THYMDSNTHASE"/>
</dbReference>
<dbReference type="SUPFAM" id="SSF55831">
    <property type="entry name" value="Thymidylate synthase/dCMP hydroxymethylase"/>
    <property type="match status" value="1"/>
</dbReference>
<dbReference type="PROSITE" id="PS00091">
    <property type="entry name" value="THYMIDYLATE_SYNTHASE"/>
    <property type="match status" value="1"/>
</dbReference>
<organism>
    <name type="scientific">Baumannia cicadellinicola subsp. Homalodisca coagulata</name>
    <dbReference type="NCBI Taxonomy" id="374463"/>
    <lineage>
        <taxon>Bacteria</taxon>
        <taxon>Pseudomonadati</taxon>
        <taxon>Pseudomonadota</taxon>
        <taxon>Gammaproteobacteria</taxon>
        <taxon>Candidatus Palibaumannia</taxon>
    </lineage>
</organism>
<keyword id="KW-0963">Cytoplasm</keyword>
<keyword id="KW-0489">Methyltransferase</keyword>
<keyword id="KW-0545">Nucleotide biosynthesis</keyword>
<keyword id="KW-1185">Reference proteome</keyword>
<keyword id="KW-0808">Transferase</keyword>
<evidence type="ECO:0000255" key="1">
    <source>
        <dbReference type="HAMAP-Rule" id="MF_00008"/>
    </source>
</evidence>
<name>TYSY_BAUCH</name>
<comment type="function">
    <text evidence="1">Catalyzes the reductive methylation of 2'-deoxyuridine-5'-monophosphate (dUMP) to 2'-deoxythymidine-5'-monophosphate (dTMP) while utilizing 5,10-methylenetetrahydrofolate (mTHF) as the methyl donor and reductant in the reaction, yielding dihydrofolate (DHF) as a by-product. This enzymatic reaction provides an intracellular de novo source of dTMP, an essential precursor for DNA biosynthesis.</text>
</comment>
<comment type="catalytic activity">
    <reaction evidence="1">
        <text>dUMP + (6R)-5,10-methylene-5,6,7,8-tetrahydrofolate = 7,8-dihydrofolate + dTMP</text>
        <dbReference type="Rhea" id="RHEA:12104"/>
        <dbReference type="ChEBI" id="CHEBI:15636"/>
        <dbReference type="ChEBI" id="CHEBI:57451"/>
        <dbReference type="ChEBI" id="CHEBI:63528"/>
        <dbReference type="ChEBI" id="CHEBI:246422"/>
        <dbReference type="EC" id="2.1.1.45"/>
    </reaction>
</comment>
<comment type="pathway">
    <text evidence="1">Pyrimidine metabolism; dTTP biosynthesis.</text>
</comment>
<comment type="subunit">
    <text evidence="1">Homodimer.</text>
</comment>
<comment type="subcellular location">
    <subcellularLocation>
        <location evidence="1">Cytoplasm</location>
    </subcellularLocation>
</comment>
<comment type="similarity">
    <text evidence="1">Belongs to the thymidylate synthase family. Bacterial-type ThyA subfamily.</text>
</comment>
<reference key="1">
    <citation type="journal article" date="2006" name="PLoS Biol.">
        <title>Metabolic complementarity and genomics of the dual bacterial symbiosis of sharpshooters.</title>
        <authorList>
            <person name="Wu D."/>
            <person name="Daugherty S.C."/>
            <person name="Van Aken S.E."/>
            <person name="Pai G.H."/>
            <person name="Watkins K.L."/>
            <person name="Khouri H."/>
            <person name="Tallon L.J."/>
            <person name="Zaborsky J.M."/>
            <person name="Dunbar H.E."/>
            <person name="Tran P.L."/>
            <person name="Moran N.A."/>
            <person name="Eisen J.A."/>
        </authorList>
    </citation>
    <scope>NUCLEOTIDE SEQUENCE [LARGE SCALE GENOMIC DNA]</scope>
</reference>
<accession>Q1LSU0</accession>
<sequence>MKQYLELMRLVRTQGISKVDRTNTGTLSIFGHQMRFNLSHGFPLITTKRCHLRSIIYELLWFLNGDTNINYLRKHHVTIWDEWINEKGDLGPIYGRQWRAWGTADGSYIDQLSDVMLQLKHNPDSRRIIVSAWNVGEIKQMALAPCHVLFQFYVANGVLSCQLYQRSCDMFLGLPFNISSYALLIHMVAQQCDLQLGEFIWTGGDIHLYRNHLKQTDLQLKRNPRPLPQLIIKRRPASLFQYQFDDFYLSGYDPHPAIKAQVAV</sequence>
<proteinExistence type="inferred from homology"/>
<protein>
    <recommendedName>
        <fullName evidence="1">Thymidylate synthase</fullName>
        <shortName evidence="1">TS</shortName>
        <shortName evidence="1">TSase</shortName>
        <ecNumber evidence="1">2.1.1.45</ecNumber>
    </recommendedName>
</protein>
<feature type="chain" id="PRO_1000000580" description="Thymidylate synthase">
    <location>
        <begin position="1"/>
        <end position="264"/>
    </location>
</feature>
<feature type="active site" description="Nucleophile" evidence="1">
    <location>
        <position position="146"/>
    </location>
</feature>
<feature type="binding site" description="in other chain" evidence="1">
    <location>
        <position position="21"/>
    </location>
    <ligand>
        <name>dUMP</name>
        <dbReference type="ChEBI" id="CHEBI:246422"/>
        <note>ligand shared between dimeric partners</note>
    </ligand>
</feature>
<feature type="binding site" evidence="1">
    <location>
        <position position="51"/>
    </location>
    <ligand>
        <name>(6R)-5,10-methylene-5,6,7,8-tetrahydrofolate</name>
        <dbReference type="ChEBI" id="CHEBI:15636"/>
    </ligand>
</feature>
<feature type="binding site" evidence="1">
    <location>
        <begin position="126"/>
        <end position="127"/>
    </location>
    <ligand>
        <name>dUMP</name>
        <dbReference type="ChEBI" id="CHEBI:246422"/>
        <note>ligand shared between dimeric partners</note>
    </ligand>
</feature>
<feature type="binding site" description="in other chain" evidence="1">
    <location>
        <begin position="166"/>
        <end position="169"/>
    </location>
    <ligand>
        <name>dUMP</name>
        <dbReference type="ChEBI" id="CHEBI:246422"/>
        <note>ligand shared between dimeric partners</note>
    </ligand>
</feature>
<feature type="binding site" evidence="1">
    <location>
        <position position="169"/>
    </location>
    <ligand>
        <name>(6R)-5,10-methylene-5,6,7,8-tetrahydrofolate</name>
        <dbReference type="ChEBI" id="CHEBI:15636"/>
    </ligand>
</feature>
<feature type="binding site" description="in other chain" evidence="1">
    <location>
        <position position="177"/>
    </location>
    <ligand>
        <name>dUMP</name>
        <dbReference type="ChEBI" id="CHEBI:246422"/>
        <note>ligand shared between dimeric partners</note>
    </ligand>
</feature>
<feature type="binding site" description="in other chain" evidence="1">
    <location>
        <begin position="207"/>
        <end position="209"/>
    </location>
    <ligand>
        <name>dUMP</name>
        <dbReference type="ChEBI" id="CHEBI:246422"/>
        <note>ligand shared between dimeric partners</note>
    </ligand>
</feature>
<feature type="binding site" evidence="1">
    <location>
        <position position="263"/>
    </location>
    <ligand>
        <name>(6R)-5,10-methylene-5,6,7,8-tetrahydrofolate</name>
        <dbReference type="ChEBI" id="CHEBI:15636"/>
    </ligand>
</feature>